<evidence type="ECO:0000250" key="1"/>
<evidence type="ECO:0000255" key="2"/>
<evidence type="ECO:0000256" key="3">
    <source>
        <dbReference type="SAM" id="MobiDB-lite"/>
    </source>
</evidence>
<evidence type="ECO:0000305" key="4"/>
<sequence length="736" mass="80331">MEEGSKENCGFNGSPMGSRSPPKQLTSAASVLGEIQIAAANLKTPTKPQERNNADPWTPTANLKMLISAASPEIRNREREILEEQFSGDELEKTLPSRKEKSLGLLCHKFLARYPSYPNPAVNNSICLDEVAGELSVERRRIYDIVNVLESLHMVSRLAKNKYIWHGRLNLSKTFDALKKVGEENRYGEQIQLLRKREQEECDSQNSPNAETQKPLAKQPEVGFVELPGLEFRAASVNSRKEKSLRVMSQRFVMLFLVSDPQIVSLEVAAKILIGEDQLEDLDKSKFKTKIRRLYDIANVLTSLNLIKKVHVTEEKGRKPAFQWTCPELCTDDQENRSSPAALTPVAIDLSSPKENCAKNLFASGGKTFTRHPSLIKLAKSIENDRRKINSAPSSPIKSGDGSSSAASKMAQLAAICKQQLQQSRDQTKVKLKVSACKAKSTVKQPGGSDKNQTPTYCRAIPLLHPHPSAAPPYTVIVQPPQEQTLSRQSPPALGYTNRTPPEAPLQGGRHEGDGTSHSEDHSAQERHPKRLPESDRGCTSKRMKSSAVDDVTETLYPSGYLIPIHLAPVAPEPSKENTGPSSENKLFTSPIPGVFPLKLMFSPGPVTAVPVMSRGGQHVGGGSGSASRSPSPGMFTFALQNRELISAGLPQGATVSPRNGRGQEELSAASVLNCKHVSPVPYHGQPFTVFALQQSAVPVTPKGYHSLQETFFRTPGGMGCSPPESARKLDVGTDD</sequence>
<accession>F7EA39</accession>
<gene>
    <name type="primary">e2f8</name>
</gene>
<name>E2F8_XENTR</name>
<organism>
    <name type="scientific">Xenopus tropicalis</name>
    <name type="common">Western clawed frog</name>
    <name type="synonym">Silurana tropicalis</name>
    <dbReference type="NCBI Taxonomy" id="8364"/>
    <lineage>
        <taxon>Eukaryota</taxon>
        <taxon>Metazoa</taxon>
        <taxon>Chordata</taxon>
        <taxon>Craniata</taxon>
        <taxon>Vertebrata</taxon>
        <taxon>Euteleostomi</taxon>
        <taxon>Amphibia</taxon>
        <taxon>Batrachia</taxon>
        <taxon>Anura</taxon>
        <taxon>Pipoidea</taxon>
        <taxon>Pipidae</taxon>
        <taxon>Xenopodinae</taxon>
        <taxon>Xenopus</taxon>
        <taxon>Silurana</taxon>
    </lineage>
</organism>
<protein>
    <recommendedName>
        <fullName>Transcription factor E2F8</fullName>
        <shortName>E2F-8</shortName>
    </recommendedName>
</protein>
<comment type="function">
    <text evidence="1">Atypical E2F transcription factor that participates in various processes such as angiogenesis and polyploidization of specialized cells. Mainly acts as a transcription repressor that binds DNA independently of DP proteins and specifically recognizes the E2 recognition site 5'-TTTC[CG]CGC-3'. Directly represses transcription of classical E2F transcription factors such as e2f1. Acts as a regulator of S-phase by recognizing and binding the E2-related site 5'-TTCCCGCC-3' and mediating repression of G1/S-regulated genes. Acts as a promoter of sprouting angiogenesis, possibly by acting as a transcription activator (By similarity).</text>
</comment>
<comment type="subunit">
    <text evidence="1">Homodimer and heterodimer: mainly forms homodimers and, to a lesser extent, heterodimers with e2f7.</text>
</comment>
<comment type="subcellular location">
    <subcellularLocation>
        <location evidence="1">Nucleus</location>
    </subcellularLocation>
</comment>
<comment type="domain">
    <text evidence="1">In contrast to classical members of the E2F transcription factor, atypical members contain 2 DNA-binding domains and regulate transcription in a DP-independent manner. Both DNA-binding domains are required for DNA-binding and are proposed to form an intramolecular structure that is similar to the winged helix structure of the E2F-DP heterodimer (By similarity).</text>
</comment>
<comment type="similarity">
    <text evidence="4">Belongs to the E2F/DP family.</text>
</comment>
<proteinExistence type="inferred from homology"/>
<keyword id="KW-0010">Activator</keyword>
<keyword id="KW-0131">Cell cycle</keyword>
<keyword id="KW-0238">DNA-binding</keyword>
<keyword id="KW-0539">Nucleus</keyword>
<keyword id="KW-1185">Reference proteome</keyword>
<keyword id="KW-0678">Repressor</keyword>
<keyword id="KW-0804">Transcription</keyword>
<keyword id="KW-0805">Transcription regulation</keyword>
<dbReference type="EMBL" id="AAMC01129757">
    <property type="status" value="NOT_ANNOTATED_CDS"/>
    <property type="molecule type" value="Genomic_DNA"/>
</dbReference>
<dbReference type="SMR" id="F7EA39"/>
<dbReference type="FunCoup" id="F7EA39">
    <property type="interactions" value="1406"/>
</dbReference>
<dbReference type="STRING" id="8364.ENSXETP00000026255"/>
<dbReference type="PaxDb" id="8364-ENSXETP00000009660"/>
<dbReference type="eggNOG" id="KOG2578">
    <property type="taxonomic scope" value="Eukaryota"/>
</dbReference>
<dbReference type="HOGENOM" id="CLU_014845_2_0_1"/>
<dbReference type="InParanoid" id="F7EA39"/>
<dbReference type="TreeFam" id="TF105567"/>
<dbReference type="Proteomes" id="UP000008143">
    <property type="component" value="Unplaced"/>
</dbReference>
<dbReference type="GO" id="GO:0005634">
    <property type="term" value="C:nucleus"/>
    <property type="evidence" value="ECO:0007669"/>
    <property type="project" value="UniProtKB-SubCell"/>
</dbReference>
<dbReference type="GO" id="GO:0005667">
    <property type="term" value="C:transcription regulator complex"/>
    <property type="evidence" value="ECO:0007669"/>
    <property type="project" value="InterPro"/>
</dbReference>
<dbReference type="GO" id="GO:0003700">
    <property type="term" value="F:DNA-binding transcription factor activity"/>
    <property type="evidence" value="ECO:0000250"/>
    <property type="project" value="UniProtKB"/>
</dbReference>
<dbReference type="GO" id="GO:0001217">
    <property type="term" value="F:DNA-binding transcription repressor activity"/>
    <property type="evidence" value="ECO:0000250"/>
    <property type="project" value="UniProtKB"/>
</dbReference>
<dbReference type="GO" id="GO:0000978">
    <property type="term" value="F:RNA polymerase II cis-regulatory region sequence-specific DNA binding"/>
    <property type="evidence" value="ECO:0007669"/>
    <property type="project" value="InterPro"/>
</dbReference>
<dbReference type="GO" id="GO:0033301">
    <property type="term" value="P:cell cycle comprising mitosis without cytokinesis"/>
    <property type="evidence" value="ECO:0000250"/>
    <property type="project" value="UniProtKB"/>
</dbReference>
<dbReference type="GO" id="GO:0060718">
    <property type="term" value="P:chorionic trophoblast cell differentiation"/>
    <property type="evidence" value="ECO:0000250"/>
    <property type="project" value="UniProtKB"/>
</dbReference>
<dbReference type="GO" id="GO:0070365">
    <property type="term" value="P:hepatocyte differentiation"/>
    <property type="evidence" value="ECO:0000250"/>
    <property type="project" value="UniProtKB"/>
</dbReference>
<dbReference type="GO" id="GO:0032466">
    <property type="term" value="P:negative regulation of cytokinesis"/>
    <property type="evidence" value="ECO:0000250"/>
    <property type="project" value="UniProtKB"/>
</dbReference>
<dbReference type="GO" id="GO:0000122">
    <property type="term" value="P:negative regulation of transcription by RNA polymerase II"/>
    <property type="evidence" value="ECO:0000250"/>
    <property type="project" value="UniProtKB"/>
</dbReference>
<dbReference type="GO" id="GO:0032877">
    <property type="term" value="P:positive regulation of DNA endoreduplication"/>
    <property type="evidence" value="ECO:0000250"/>
    <property type="project" value="UniProtKB"/>
</dbReference>
<dbReference type="GO" id="GO:0002040">
    <property type="term" value="P:sprouting angiogenesis"/>
    <property type="evidence" value="ECO:0000250"/>
    <property type="project" value="UniProtKB"/>
</dbReference>
<dbReference type="FunFam" id="1.10.10.10:FF:000073">
    <property type="entry name" value="E2F transcription factor 8"/>
    <property type="match status" value="1"/>
</dbReference>
<dbReference type="FunFam" id="1.10.10.10:FF:000100">
    <property type="entry name" value="E2F transcription factor 8"/>
    <property type="match status" value="1"/>
</dbReference>
<dbReference type="Gene3D" id="1.10.10.10">
    <property type="entry name" value="Winged helix-like DNA-binding domain superfamily/Winged helix DNA-binding domain"/>
    <property type="match status" value="2"/>
</dbReference>
<dbReference type="InterPro" id="IPR015633">
    <property type="entry name" value="E2F"/>
</dbReference>
<dbReference type="InterPro" id="IPR003316">
    <property type="entry name" value="E2F_WHTH_DNA-bd_dom"/>
</dbReference>
<dbReference type="InterPro" id="IPR036388">
    <property type="entry name" value="WH-like_DNA-bd_sf"/>
</dbReference>
<dbReference type="InterPro" id="IPR036390">
    <property type="entry name" value="WH_DNA-bd_sf"/>
</dbReference>
<dbReference type="PANTHER" id="PTHR12081">
    <property type="entry name" value="TRANSCRIPTION FACTOR E2F"/>
    <property type="match status" value="1"/>
</dbReference>
<dbReference type="PANTHER" id="PTHR12081:SF40">
    <property type="entry name" value="TRANSCRIPTION FACTOR E2F8"/>
    <property type="match status" value="1"/>
</dbReference>
<dbReference type="Pfam" id="PF02319">
    <property type="entry name" value="E2F_TDP"/>
    <property type="match status" value="2"/>
</dbReference>
<dbReference type="SMART" id="SM01372">
    <property type="entry name" value="E2F_TDP"/>
    <property type="match status" value="2"/>
</dbReference>
<dbReference type="SUPFAM" id="SSF46785">
    <property type="entry name" value="Winged helix' DNA-binding domain"/>
    <property type="match status" value="2"/>
</dbReference>
<reference key="1">
    <citation type="journal article" date="2010" name="Science">
        <title>The genome of the Western clawed frog Xenopus tropicalis.</title>
        <authorList>
            <person name="Hellsten U."/>
            <person name="Harland R.M."/>
            <person name="Gilchrist M.J."/>
            <person name="Hendrix D."/>
            <person name="Jurka J."/>
            <person name="Kapitonov V."/>
            <person name="Ovcharenko I."/>
            <person name="Putnam N.H."/>
            <person name="Shu S."/>
            <person name="Taher L."/>
            <person name="Blitz I.L."/>
            <person name="Blumberg B."/>
            <person name="Dichmann D.S."/>
            <person name="Dubchak I."/>
            <person name="Amaya E."/>
            <person name="Detter J.C."/>
            <person name="Fletcher R."/>
            <person name="Gerhard D.S."/>
            <person name="Goodstein D."/>
            <person name="Graves T."/>
            <person name="Grigoriev I.V."/>
            <person name="Grimwood J."/>
            <person name="Kawashima T."/>
            <person name="Lindquist E."/>
            <person name="Lucas S.M."/>
            <person name="Mead P.E."/>
            <person name="Mitros T."/>
            <person name="Ogino H."/>
            <person name="Ohta Y."/>
            <person name="Poliakov A.V."/>
            <person name="Pollet N."/>
            <person name="Robert J."/>
            <person name="Salamov A."/>
            <person name="Sater A.K."/>
            <person name="Schmutz J."/>
            <person name="Terry A."/>
            <person name="Vize P.D."/>
            <person name="Warren W.C."/>
            <person name="Wells D."/>
            <person name="Wills A."/>
            <person name="Wilson R.K."/>
            <person name="Zimmerman L.B."/>
            <person name="Zorn A.M."/>
            <person name="Grainger R."/>
            <person name="Grammer T."/>
            <person name="Khokha M.K."/>
            <person name="Richardson P.M."/>
            <person name="Rokhsar D.S."/>
        </authorList>
    </citation>
    <scope>NUCLEOTIDE SEQUENCE [LARGE SCALE GENOMIC DNA]</scope>
</reference>
<feature type="chain" id="PRO_0000420711" description="Transcription factor E2F8">
    <location>
        <begin position="1"/>
        <end position="736"/>
    </location>
</feature>
<feature type="DNA-binding region" evidence="2">
    <location>
        <begin position="98"/>
        <end position="167"/>
    </location>
</feature>
<feature type="DNA-binding region" evidence="2">
    <location>
        <begin position="240"/>
        <end position="326"/>
    </location>
</feature>
<feature type="region of interest" description="Disordered" evidence="3">
    <location>
        <begin position="1"/>
        <end position="26"/>
    </location>
</feature>
<feature type="region of interest" description="Disordered" evidence="3">
    <location>
        <begin position="386"/>
        <end position="405"/>
    </location>
</feature>
<feature type="region of interest" description="Disordered" evidence="3">
    <location>
        <begin position="435"/>
        <end position="456"/>
    </location>
</feature>
<feature type="region of interest" description="Disordered" evidence="3">
    <location>
        <begin position="483"/>
        <end position="551"/>
    </location>
</feature>
<feature type="region of interest" description="Disordered" evidence="3">
    <location>
        <begin position="716"/>
        <end position="736"/>
    </location>
</feature>
<feature type="compositionally biased region" description="Polar residues" evidence="3">
    <location>
        <begin position="15"/>
        <end position="26"/>
    </location>
</feature>
<feature type="compositionally biased region" description="Low complexity" evidence="3">
    <location>
        <begin position="393"/>
        <end position="405"/>
    </location>
</feature>
<feature type="compositionally biased region" description="Basic and acidic residues" evidence="3">
    <location>
        <begin position="509"/>
        <end position="539"/>
    </location>
</feature>
<feature type="compositionally biased region" description="Basic and acidic residues" evidence="3">
    <location>
        <begin position="726"/>
        <end position="736"/>
    </location>
</feature>